<dbReference type="EC" id="5.3.1.26" evidence="1"/>
<dbReference type="PIR" id="A38158">
    <property type="entry name" value="A38158"/>
</dbReference>
<dbReference type="RefSeq" id="WP_238608721.1">
    <property type="nucleotide sequence ID" value="NZ_JAKOIF010000006.1"/>
</dbReference>
<dbReference type="SMR" id="P0C1R5"/>
<dbReference type="BioCyc" id="MetaCyc:MONOMER-2781"/>
<dbReference type="UniPathway" id="UPA00702">
    <property type="reaction ID" value="UER00714"/>
</dbReference>
<dbReference type="GO" id="GO:0050044">
    <property type="term" value="F:galactose-6-phosphate isomerase activity"/>
    <property type="evidence" value="ECO:0007669"/>
    <property type="project" value="UniProtKB-UniRule"/>
</dbReference>
<dbReference type="GO" id="GO:0004751">
    <property type="term" value="F:ribose-5-phosphate isomerase activity"/>
    <property type="evidence" value="ECO:0007669"/>
    <property type="project" value="TreeGrafter"/>
</dbReference>
<dbReference type="GO" id="GO:0019316">
    <property type="term" value="P:D-allose catabolic process"/>
    <property type="evidence" value="ECO:0007669"/>
    <property type="project" value="TreeGrafter"/>
</dbReference>
<dbReference type="GO" id="GO:0019388">
    <property type="term" value="P:galactose catabolic process"/>
    <property type="evidence" value="ECO:0007669"/>
    <property type="project" value="UniProtKB-UniPathway"/>
</dbReference>
<dbReference type="GO" id="GO:0019512">
    <property type="term" value="P:lactose catabolic process via tagatose-6-phosphate"/>
    <property type="evidence" value="ECO:0007669"/>
    <property type="project" value="UniProtKB-UniRule"/>
</dbReference>
<dbReference type="GO" id="GO:0009052">
    <property type="term" value="P:pentose-phosphate shunt, non-oxidative branch"/>
    <property type="evidence" value="ECO:0007669"/>
    <property type="project" value="TreeGrafter"/>
</dbReference>
<dbReference type="Gene3D" id="3.40.1400.10">
    <property type="entry name" value="Sugar-phosphate isomerase, RpiB/LacA/LacB"/>
    <property type="match status" value="1"/>
</dbReference>
<dbReference type="HAMAP" id="MF_01555">
    <property type="entry name" value="LacA"/>
    <property type="match status" value="1"/>
</dbReference>
<dbReference type="InterPro" id="IPR004783">
    <property type="entry name" value="LacA"/>
</dbReference>
<dbReference type="InterPro" id="IPR003500">
    <property type="entry name" value="RpiB_LacA_LacB"/>
</dbReference>
<dbReference type="InterPro" id="IPR036569">
    <property type="entry name" value="RpiB_LacA_LacB_sf"/>
</dbReference>
<dbReference type="NCBIfam" id="TIGR01118">
    <property type="entry name" value="lacA"/>
    <property type="match status" value="1"/>
</dbReference>
<dbReference type="NCBIfam" id="NF006380">
    <property type="entry name" value="PRK08621.1"/>
    <property type="match status" value="1"/>
</dbReference>
<dbReference type="NCBIfam" id="TIGR00689">
    <property type="entry name" value="rpiB_lacA_lacB"/>
    <property type="match status" value="1"/>
</dbReference>
<dbReference type="PANTHER" id="PTHR30345:SF5">
    <property type="entry name" value="GALACTOSE-6-PHOSPHATE ISOMERASE SUBUNIT LACA"/>
    <property type="match status" value="1"/>
</dbReference>
<dbReference type="PANTHER" id="PTHR30345">
    <property type="entry name" value="RIBOSE-5-PHOSPHATE ISOMERASE B"/>
    <property type="match status" value="1"/>
</dbReference>
<dbReference type="Pfam" id="PF02502">
    <property type="entry name" value="LacAB_rpiB"/>
    <property type="match status" value="1"/>
</dbReference>
<dbReference type="PIRSF" id="PIRSF005384">
    <property type="entry name" value="RpiB_LacA_B"/>
    <property type="match status" value="1"/>
</dbReference>
<dbReference type="SUPFAM" id="SSF89623">
    <property type="entry name" value="Ribose/Galactose isomerase RpiB/AlsB"/>
    <property type="match status" value="1"/>
</dbReference>
<evidence type="ECO:0000255" key="1">
    <source>
        <dbReference type="HAMAP-Rule" id="MF_01555"/>
    </source>
</evidence>
<gene>
    <name evidence="1" type="primary">lacA</name>
</gene>
<sequence>MAIIIGSDEAGKRLKEVIKSYLLDNKYDVVDVTEGQEVDFVDATLAVAKDVQSQEGNLGIVIDAFGTGSFMVATKIKGMIAAEVSDERSGYMTRGHNNSRMITMGSEIVGDTLAKNVVKGFVEGKYDGGRHQIRVDMLNKMC</sequence>
<reference key="1">
    <citation type="journal article" date="1991" name="J. Bacteriol.">
        <title>Lactose metabolism by Staphylococcus aureus: characterization of lacABCD, the structural genes of the tagatose 6-phosphate pathway.</title>
        <authorList>
            <person name="Rosey E.L."/>
            <person name="Oskouian B."/>
            <person name="Stewart G.C."/>
        </authorList>
    </citation>
    <scope>NUCLEOTIDE SEQUENCE [GENOMIC DNA]</scope>
</reference>
<keyword id="KW-0413">Isomerase</keyword>
<keyword id="KW-0423">Lactose metabolism</keyword>
<accession>P0C1R5</accession>
<accession>P26594</accession>
<comment type="catalytic activity">
    <reaction evidence="1">
        <text>aldehydo-D-galactose 6-phosphate = keto-D-tagatose 6-phosphate</text>
        <dbReference type="Rhea" id="RHEA:13033"/>
        <dbReference type="ChEBI" id="CHEBI:58255"/>
        <dbReference type="ChEBI" id="CHEBI:134283"/>
        <dbReference type="EC" id="5.3.1.26"/>
    </reaction>
</comment>
<comment type="pathway">
    <text evidence="1">Carbohydrate metabolism; D-galactose 6-phosphate degradation; D-tagatose 6-phosphate from D-galactose 6-phosphate: step 1/1.</text>
</comment>
<comment type="subunit">
    <text evidence="1">Heteromultimeric protein consisting of LacA and LacB.</text>
</comment>
<comment type="similarity">
    <text evidence="1">Belongs to the LacAB/RpiB family.</text>
</comment>
<organism>
    <name type="scientific">Staphylococcus aureus</name>
    <dbReference type="NCBI Taxonomy" id="1280"/>
    <lineage>
        <taxon>Bacteria</taxon>
        <taxon>Bacillati</taxon>
        <taxon>Bacillota</taxon>
        <taxon>Bacilli</taxon>
        <taxon>Bacillales</taxon>
        <taxon>Staphylococcaceae</taxon>
        <taxon>Staphylococcus</taxon>
    </lineage>
</organism>
<name>LACA_STAAU</name>
<protein>
    <recommendedName>
        <fullName evidence="1">Galactose-6-phosphate isomerase subunit LacA</fullName>
        <ecNumber evidence="1">5.3.1.26</ecNumber>
    </recommendedName>
</protein>
<feature type="chain" id="PRO_0000208105" description="Galactose-6-phosphate isomerase subunit LacA">
    <location>
        <begin position="1"/>
        <end position="142"/>
    </location>
</feature>
<proteinExistence type="inferred from homology"/>